<accession>A7HWS7</accession>
<keyword id="KW-1185">Reference proteome</keyword>
<keyword id="KW-0687">Ribonucleoprotein</keyword>
<keyword id="KW-0689">Ribosomal protein</keyword>
<keyword id="KW-0694">RNA-binding</keyword>
<keyword id="KW-0699">rRNA-binding</keyword>
<feature type="chain" id="PRO_1000073308" description="Large ribosomal subunit protein uL18">
    <location>
        <begin position="1"/>
        <end position="118"/>
    </location>
</feature>
<gene>
    <name evidence="1" type="primary">rplR</name>
    <name type="ordered locus">Plav_2752</name>
</gene>
<comment type="function">
    <text evidence="1">This is one of the proteins that bind and probably mediate the attachment of the 5S RNA into the large ribosomal subunit, where it forms part of the central protuberance.</text>
</comment>
<comment type="subunit">
    <text evidence="1">Part of the 50S ribosomal subunit; part of the 5S rRNA/L5/L18/L25 subcomplex. Contacts the 5S and 23S rRNAs.</text>
</comment>
<comment type="similarity">
    <text evidence="1">Belongs to the universal ribosomal protein uL18 family.</text>
</comment>
<reference key="1">
    <citation type="journal article" date="2011" name="Stand. Genomic Sci.">
        <title>Complete genome sequence of Parvibaculum lavamentivorans type strain (DS-1(T)).</title>
        <authorList>
            <person name="Schleheck D."/>
            <person name="Weiss M."/>
            <person name="Pitluck S."/>
            <person name="Bruce D."/>
            <person name="Land M.L."/>
            <person name="Han S."/>
            <person name="Saunders E."/>
            <person name="Tapia R."/>
            <person name="Detter C."/>
            <person name="Brettin T."/>
            <person name="Han J."/>
            <person name="Woyke T."/>
            <person name="Goodwin L."/>
            <person name="Pennacchio L."/>
            <person name="Nolan M."/>
            <person name="Cook A.M."/>
            <person name="Kjelleberg S."/>
            <person name="Thomas T."/>
        </authorList>
    </citation>
    <scope>NUCLEOTIDE SEQUENCE [LARGE SCALE GENOMIC DNA]</scope>
    <source>
        <strain>DS-1 / DSM 13023 / NCIMB 13966</strain>
    </source>
</reference>
<name>RL18_PARL1</name>
<dbReference type="EMBL" id="CP000774">
    <property type="protein sequence ID" value="ABS64360.1"/>
    <property type="molecule type" value="Genomic_DNA"/>
</dbReference>
<dbReference type="RefSeq" id="WP_012111674.1">
    <property type="nucleotide sequence ID" value="NC_009719.1"/>
</dbReference>
<dbReference type="SMR" id="A7HWS7"/>
<dbReference type="STRING" id="402881.Plav_2752"/>
<dbReference type="KEGG" id="pla:Plav_2752"/>
<dbReference type="eggNOG" id="COG0256">
    <property type="taxonomic scope" value="Bacteria"/>
</dbReference>
<dbReference type="HOGENOM" id="CLU_098841_0_1_5"/>
<dbReference type="OrthoDB" id="9810939at2"/>
<dbReference type="Proteomes" id="UP000006377">
    <property type="component" value="Chromosome"/>
</dbReference>
<dbReference type="GO" id="GO:0022625">
    <property type="term" value="C:cytosolic large ribosomal subunit"/>
    <property type="evidence" value="ECO:0007669"/>
    <property type="project" value="TreeGrafter"/>
</dbReference>
<dbReference type="GO" id="GO:0008097">
    <property type="term" value="F:5S rRNA binding"/>
    <property type="evidence" value="ECO:0007669"/>
    <property type="project" value="TreeGrafter"/>
</dbReference>
<dbReference type="GO" id="GO:0003735">
    <property type="term" value="F:structural constituent of ribosome"/>
    <property type="evidence" value="ECO:0007669"/>
    <property type="project" value="InterPro"/>
</dbReference>
<dbReference type="GO" id="GO:0006412">
    <property type="term" value="P:translation"/>
    <property type="evidence" value="ECO:0007669"/>
    <property type="project" value="UniProtKB-UniRule"/>
</dbReference>
<dbReference type="CDD" id="cd00432">
    <property type="entry name" value="Ribosomal_L18_L5e"/>
    <property type="match status" value="1"/>
</dbReference>
<dbReference type="FunFam" id="3.30.420.100:FF:000001">
    <property type="entry name" value="50S ribosomal protein L18"/>
    <property type="match status" value="1"/>
</dbReference>
<dbReference type="Gene3D" id="3.30.420.100">
    <property type="match status" value="1"/>
</dbReference>
<dbReference type="HAMAP" id="MF_01337_B">
    <property type="entry name" value="Ribosomal_uL18_B"/>
    <property type="match status" value="1"/>
</dbReference>
<dbReference type="InterPro" id="IPR004389">
    <property type="entry name" value="Ribosomal_uL18_bac-type"/>
</dbReference>
<dbReference type="InterPro" id="IPR005484">
    <property type="entry name" value="Ribosomal_uL18_bac/euk"/>
</dbReference>
<dbReference type="NCBIfam" id="TIGR00060">
    <property type="entry name" value="L18_bact"/>
    <property type="match status" value="1"/>
</dbReference>
<dbReference type="PANTHER" id="PTHR12899">
    <property type="entry name" value="39S RIBOSOMAL PROTEIN L18, MITOCHONDRIAL"/>
    <property type="match status" value="1"/>
</dbReference>
<dbReference type="PANTHER" id="PTHR12899:SF3">
    <property type="entry name" value="LARGE RIBOSOMAL SUBUNIT PROTEIN UL18M"/>
    <property type="match status" value="1"/>
</dbReference>
<dbReference type="Pfam" id="PF00861">
    <property type="entry name" value="Ribosomal_L18p"/>
    <property type="match status" value="1"/>
</dbReference>
<dbReference type="SUPFAM" id="SSF53137">
    <property type="entry name" value="Translational machinery components"/>
    <property type="match status" value="1"/>
</dbReference>
<sequence>MSNMKTLSQRRAMRNRAKLAKASVVRPRLSVFRSSKHIYAQVIDDTRGVTVAAASSLDEKFGKKAGTDVAAAGEVGKLLAQRAKDAGITDVVFDRGGYIYHGRVKALAEGAREGGLNF</sequence>
<organism>
    <name type="scientific">Parvibaculum lavamentivorans (strain DS-1 / DSM 13023 / NCIMB 13966)</name>
    <dbReference type="NCBI Taxonomy" id="402881"/>
    <lineage>
        <taxon>Bacteria</taxon>
        <taxon>Pseudomonadati</taxon>
        <taxon>Pseudomonadota</taxon>
        <taxon>Alphaproteobacteria</taxon>
        <taxon>Hyphomicrobiales</taxon>
        <taxon>Parvibaculaceae</taxon>
        <taxon>Parvibaculum</taxon>
    </lineage>
</organism>
<protein>
    <recommendedName>
        <fullName evidence="1">Large ribosomal subunit protein uL18</fullName>
    </recommendedName>
    <alternativeName>
        <fullName evidence="2">50S ribosomal protein L18</fullName>
    </alternativeName>
</protein>
<proteinExistence type="inferred from homology"/>
<evidence type="ECO:0000255" key="1">
    <source>
        <dbReference type="HAMAP-Rule" id="MF_01337"/>
    </source>
</evidence>
<evidence type="ECO:0000305" key="2"/>